<organism>
    <name type="scientific">Schizosaccharomyces pombe (strain 972 / ATCC 24843)</name>
    <name type="common">Fission yeast</name>
    <dbReference type="NCBI Taxonomy" id="284812"/>
    <lineage>
        <taxon>Eukaryota</taxon>
        <taxon>Fungi</taxon>
        <taxon>Dikarya</taxon>
        <taxon>Ascomycota</taxon>
        <taxon>Taphrinomycotina</taxon>
        <taxon>Schizosaccharomycetes</taxon>
        <taxon>Schizosaccharomycetales</taxon>
        <taxon>Schizosaccharomycetaceae</taxon>
        <taxon>Schizosaccharomyces</taxon>
    </lineage>
</organism>
<accession>O60124</accession>
<feature type="chain" id="PRO_0000139965" description="Exosome complex component rrp42">
    <location>
        <begin position="1"/>
        <end position="299"/>
    </location>
</feature>
<evidence type="ECO:0000250" key="1">
    <source>
        <dbReference type="UniProtKB" id="Q12277"/>
    </source>
</evidence>
<evidence type="ECO:0000269" key="2">
    <source>
    </source>
</evidence>
<evidence type="ECO:0000305" key="3"/>
<sequence length="299" mass="32013">MQLSLPELSYTHKSITEFEPAIRNDGRSIDQLRPLSGQVDVLPGTNGSARVKWASSVEIVIGVKAEVGDATPEGGKYVASVEISPSVSIQNRETDEIPSFLTSALQDLLNALAVDYLKFTPSKAWIIHVDAVVILSSSPYENILSALSLAAYLALQTTRLPKISTPNVTDITIGSTKYEPSEEYDVDSEWENALPLQGLELMSVIILVSSIDQVIIVDPTIEESSVAQVTYAIGVQASGAISYTRVVGTGGGYASTGRAITVERYIELLETASTVGTKLLNASSDILSFKGLGFFDILP</sequence>
<comment type="function">
    <text evidence="1">Non-catalytic component of the RNA exosome complex which has 3'-&gt;5' exoribonuclease activity and participates in a multitude of cellular RNA processing and degradation events. In the nucleus, the RNA exosome complex is involved in proper maturation of stable RNA species such as rRNA, snRNA and snoRNA, in the elimination of RNA processing by-products and non-coding 'pervasive' transcripts, such as antisense RNA species and cryptic unstable transcripts (CUTs), and of mRNAs with processing defects, thereby limiting or excluding their export to the cytoplasm. In the cytoplasm, the RNA exosome complex is involved in general mRNA turnover and in RNA surveillance pathways, preventing translation of aberrant mRNAs. The catalytic inactive RNA exosome core complex of 9 subunits (Exo-9) is proposed to play a pivotal role in the binding and presentation of RNA for ribonucleolysis, and to serve as a scaffold for the association with catalytic subunits and accessory proteins or complexes. ski6 is part of the hexameric ring of RNase PH domain-containing subunits proposed to form a central channel which threads RNA substrates for degradation (By similarity).</text>
</comment>
<comment type="subunit">
    <text evidence="1">Component of the RNA exosome complex. Specifically part of the catalytically inactive RNA exosome core complex (Exo-9) which may associate with the catalytic subunits rrp6 and dis3 in cytoplasmic- and nuclear-specific RNA exosome complex forms. Exo-9 is formed by a hexameric base ring of RNase PH domain-containing subunits and a cap ring consisting of csl4, rrp4 and rrp40.</text>
</comment>
<comment type="subcellular location">
    <subcellularLocation>
        <location evidence="2">Cytoplasm</location>
    </subcellularLocation>
    <subcellularLocation>
        <location evidence="2">Nucleus</location>
        <location evidence="2">Nucleolus</location>
    </subcellularLocation>
</comment>
<comment type="similarity">
    <text evidence="3">Belongs to the RNase PH family.</text>
</comment>
<gene>
    <name type="primary">rrp42</name>
    <name type="ORF">SPBC16G5.10</name>
</gene>
<protein>
    <recommendedName>
        <fullName>Exosome complex component rrp42</fullName>
    </recommendedName>
    <alternativeName>
        <fullName>Ribosomal RNA-processing protein 42</fullName>
    </alternativeName>
</protein>
<dbReference type="EMBL" id="CU329671">
    <property type="protein sequence ID" value="CAA19030.1"/>
    <property type="molecule type" value="Genomic_DNA"/>
</dbReference>
<dbReference type="PIR" id="T39602">
    <property type="entry name" value="T39602"/>
</dbReference>
<dbReference type="RefSeq" id="NP_596759.1">
    <property type="nucleotide sequence ID" value="NM_001023779.2"/>
</dbReference>
<dbReference type="SMR" id="O60124"/>
<dbReference type="BioGRID" id="276653">
    <property type="interactions" value="5"/>
</dbReference>
<dbReference type="ComplexPortal" id="CPX-8914">
    <property type="entry name" value="Nucleolar exosome complex"/>
</dbReference>
<dbReference type="FunCoup" id="O60124">
    <property type="interactions" value="77"/>
</dbReference>
<dbReference type="IntAct" id="O60124">
    <property type="interactions" value="1"/>
</dbReference>
<dbReference type="STRING" id="284812.O60124"/>
<dbReference type="PaxDb" id="4896-SPBC16G5.10.1"/>
<dbReference type="EnsemblFungi" id="SPBC16G5.10.1">
    <property type="protein sequence ID" value="SPBC16G5.10.1:pep"/>
    <property type="gene ID" value="SPBC16G5.10"/>
</dbReference>
<dbReference type="GeneID" id="2540116"/>
<dbReference type="KEGG" id="spo:2540116"/>
<dbReference type="PomBase" id="SPBC16G5.10">
    <property type="gene designation" value="rrp42"/>
</dbReference>
<dbReference type="VEuPathDB" id="FungiDB:SPBC16G5.10"/>
<dbReference type="eggNOG" id="KOG1612">
    <property type="taxonomic scope" value="Eukaryota"/>
</dbReference>
<dbReference type="HOGENOM" id="CLU_927994_0_0_1"/>
<dbReference type="InParanoid" id="O60124"/>
<dbReference type="OMA" id="INKRWHW"/>
<dbReference type="PhylomeDB" id="O60124"/>
<dbReference type="Reactome" id="R-SPO-429958">
    <property type="pathway name" value="mRNA decay by 3' to 5' exoribonuclease"/>
</dbReference>
<dbReference type="Reactome" id="R-SPO-6791226">
    <property type="pathway name" value="Major pathway of rRNA processing in the nucleolus and cytosol"/>
</dbReference>
<dbReference type="PRO" id="PR:O60124"/>
<dbReference type="Proteomes" id="UP000002485">
    <property type="component" value="Chromosome II"/>
</dbReference>
<dbReference type="GO" id="GO:0000177">
    <property type="term" value="C:cytoplasmic exosome (RNase complex)"/>
    <property type="evidence" value="ECO:0000318"/>
    <property type="project" value="GO_Central"/>
</dbReference>
<dbReference type="GO" id="GO:0005829">
    <property type="term" value="C:cytosol"/>
    <property type="evidence" value="ECO:0007005"/>
    <property type="project" value="PomBase"/>
</dbReference>
<dbReference type="GO" id="GO:0000178">
    <property type="term" value="C:exosome (RNase complex)"/>
    <property type="evidence" value="ECO:0000314"/>
    <property type="project" value="PomBase"/>
</dbReference>
<dbReference type="GO" id="GO:0000176">
    <property type="term" value="C:nuclear exosome (RNase complex)"/>
    <property type="evidence" value="ECO:0000269"/>
    <property type="project" value="PomBase"/>
</dbReference>
<dbReference type="GO" id="GO:0005730">
    <property type="term" value="C:nucleolus"/>
    <property type="evidence" value="ECO:0007669"/>
    <property type="project" value="UniProtKB-SubCell"/>
</dbReference>
<dbReference type="GO" id="GO:0005634">
    <property type="term" value="C:nucleus"/>
    <property type="evidence" value="ECO:0007005"/>
    <property type="project" value="PomBase"/>
</dbReference>
<dbReference type="GO" id="GO:0000175">
    <property type="term" value="F:3'-5'-RNA exonuclease activity"/>
    <property type="evidence" value="ECO:0000266"/>
    <property type="project" value="PomBase"/>
</dbReference>
<dbReference type="GO" id="GO:0035925">
    <property type="term" value="F:mRNA 3'-UTR AU-rich region binding"/>
    <property type="evidence" value="ECO:0000318"/>
    <property type="project" value="GO_Central"/>
</dbReference>
<dbReference type="GO" id="GO:0000467">
    <property type="term" value="P:exonucleolytic trimming to generate mature 3'-end of 5.8S rRNA from tricistronic rRNA transcript (SSU-rRNA, 5.8S rRNA, LSU-rRNA)"/>
    <property type="evidence" value="ECO:0000318"/>
    <property type="project" value="GO_Central"/>
</dbReference>
<dbReference type="GO" id="GO:0070651">
    <property type="term" value="P:nonfunctional rRNA decay"/>
    <property type="evidence" value="ECO:0000266"/>
    <property type="project" value="PomBase"/>
</dbReference>
<dbReference type="GO" id="GO:0071028">
    <property type="term" value="P:nuclear mRNA surveillance"/>
    <property type="evidence" value="ECO:0000318"/>
    <property type="project" value="GO_Central"/>
</dbReference>
<dbReference type="GO" id="GO:0071042">
    <property type="term" value="P:nuclear polyadenylation-dependent mRNA catabolic process"/>
    <property type="evidence" value="ECO:0000266"/>
    <property type="project" value="PomBase"/>
</dbReference>
<dbReference type="GO" id="GO:0071035">
    <property type="term" value="P:nuclear polyadenylation-dependent rRNA catabolic process"/>
    <property type="evidence" value="ECO:0000318"/>
    <property type="project" value="GO_Central"/>
</dbReference>
<dbReference type="GO" id="GO:0070478">
    <property type="term" value="P:nuclear-transcribed mRNA catabolic process, 3'-5' exonucleolytic nonsense-mediated decay"/>
    <property type="evidence" value="ECO:0000266"/>
    <property type="project" value="PomBase"/>
</dbReference>
<dbReference type="GO" id="GO:0070481">
    <property type="term" value="P:nuclear-transcribed mRNA catabolic process, non-stop decay"/>
    <property type="evidence" value="ECO:0000266"/>
    <property type="project" value="PomBase"/>
</dbReference>
<dbReference type="GO" id="GO:0016075">
    <property type="term" value="P:rRNA catabolic process"/>
    <property type="evidence" value="ECO:0000318"/>
    <property type="project" value="GO_Central"/>
</dbReference>
<dbReference type="GO" id="GO:0071038">
    <property type="term" value="P:TRAMP-dependent tRNA surveillance pathway"/>
    <property type="evidence" value="ECO:0000318"/>
    <property type="project" value="GO_Central"/>
</dbReference>
<dbReference type="GO" id="GO:0034473">
    <property type="term" value="P:U1 snRNA 3'-end processing"/>
    <property type="evidence" value="ECO:0000318"/>
    <property type="project" value="GO_Central"/>
</dbReference>
<dbReference type="GO" id="GO:0034475">
    <property type="term" value="P:U4 snRNA 3'-end processing"/>
    <property type="evidence" value="ECO:0000318"/>
    <property type="project" value="GO_Central"/>
</dbReference>
<dbReference type="GO" id="GO:0034476">
    <property type="term" value="P:U5 snRNA 3'-end processing"/>
    <property type="evidence" value="ECO:0000318"/>
    <property type="project" value="GO_Central"/>
</dbReference>
<dbReference type="FunFam" id="3.30.230.70:FF:000061">
    <property type="entry name" value="Exosome complex component rrp42"/>
    <property type="match status" value="1"/>
</dbReference>
<dbReference type="Gene3D" id="3.30.230.70">
    <property type="entry name" value="GHMP Kinase, N-terminal domain"/>
    <property type="match status" value="1"/>
</dbReference>
<dbReference type="InterPro" id="IPR001247">
    <property type="entry name" value="ExoRNase_PH_dom1"/>
</dbReference>
<dbReference type="InterPro" id="IPR036345">
    <property type="entry name" value="ExoRNase_PH_dom2_sf"/>
</dbReference>
<dbReference type="InterPro" id="IPR050590">
    <property type="entry name" value="Exosome_comp_Rrp42_subfam"/>
</dbReference>
<dbReference type="InterPro" id="IPR027408">
    <property type="entry name" value="PNPase/RNase_PH_dom_sf"/>
</dbReference>
<dbReference type="InterPro" id="IPR020568">
    <property type="entry name" value="Ribosomal_Su5_D2-typ_SF"/>
</dbReference>
<dbReference type="PANTHER" id="PTHR11097:SF8">
    <property type="entry name" value="EXOSOME COMPLEX COMPONENT RRP42"/>
    <property type="match status" value="1"/>
</dbReference>
<dbReference type="PANTHER" id="PTHR11097">
    <property type="entry name" value="EXOSOME COMPLEX EXONUCLEASE RIBOSOMAL RNA PROCESSING PROTEIN"/>
    <property type="match status" value="1"/>
</dbReference>
<dbReference type="Pfam" id="PF01138">
    <property type="entry name" value="RNase_PH"/>
    <property type="match status" value="1"/>
</dbReference>
<dbReference type="SUPFAM" id="SSF55666">
    <property type="entry name" value="Ribonuclease PH domain 2-like"/>
    <property type="match status" value="1"/>
</dbReference>
<dbReference type="SUPFAM" id="SSF54211">
    <property type="entry name" value="Ribosomal protein S5 domain 2-like"/>
    <property type="match status" value="1"/>
</dbReference>
<name>RRP42_SCHPO</name>
<reference key="1">
    <citation type="journal article" date="2002" name="Nature">
        <title>The genome sequence of Schizosaccharomyces pombe.</title>
        <authorList>
            <person name="Wood V."/>
            <person name="Gwilliam R."/>
            <person name="Rajandream M.A."/>
            <person name="Lyne M.H."/>
            <person name="Lyne R."/>
            <person name="Stewart A."/>
            <person name="Sgouros J.G."/>
            <person name="Peat N."/>
            <person name="Hayles J."/>
            <person name="Baker S.G."/>
            <person name="Basham D."/>
            <person name="Bowman S."/>
            <person name="Brooks K."/>
            <person name="Brown D."/>
            <person name="Brown S."/>
            <person name="Chillingworth T."/>
            <person name="Churcher C.M."/>
            <person name="Collins M."/>
            <person name="Connor R."/>
            <person name="Cronin A."/>
            <person name="Davis P."/>
            <person name="Feltwell T."/>
            <person name="Fraser A."/>
            <person name="Gentles S."/>
            <person name="Goble A."/>
            <person name="Hamlin N."/>
            <person name="Harris D.E."/>
            <person name="Hidalgo J."/>
            <person name="Hodgson G."/>
            <person name="Holroyd S."/>
            <person name="Hornsby T."/>
            <person name="Howarth S."/>
            <person name="Huckle E.J."/>
            <person name="Hunt S."/>
            <person name="Jagels K."/>
            <person name="James K.D."/>
            <person name="Jones L."/>
            <person name="Jones M."/>
            <person name="Leather S."/>
            <person name="McDonald S."/>
            <person name="McLean J."/>
            <person name="Mooney P."/>
            <person name="Moule S."/>
            <person name="Mungall K.L."/>
            <person name="Murphy L.D."/>
            <person name="Niblett D."/>
            <person name="Odell C."/>
            <person name="Oliver K."/>
            <person name="O'Neil S."/>
            <person name="Pearson D."/>
            <person name="Quail M.A."/>
            <person name="Rabbinowitsch E."/>
            <person name="Rutherford K.M."/>
            <person name="Rutter S."/>
            <person name="Saunders D."/>
            <person name="Seeger K."/>
            <person name="Sharp S."/>
            <person name="Skelton J."/>
            <person name="Simmonds M.N."/>
            <person name="Squares R."/>
            <person name="Squares S."/>
            <person name="Stevens K."/>
            <person name="Taylor K."/>
            <person name="Taylor R.G."/>
            <person name="Tivey A."/>
            <person name="Walsh S.V."/>
            <person name="Warren T."/>
            <person name="Whitehead S."/>
            <person name="Woodward J.R."/>
            <person name="Volckaert G."/>
            <person name="Aert R."/>
            <person name="Robben J."/>
            <person name="Grymonprez B."/>
            <person name="Weltjens I."/>
            <person name="Vanstreels E."/>
            <person name="Rieger M."/>
            <person name="Schaefer M."/>
            <person name="Mueller-Auer S."/>
            <person name="Gabel C."/>
            <person name="Fuchs M."/>
            <person name="Duesterhoeft A."/>
            <person name="Fritzc C."/>
            <person name="Holzer E."/>
            <person name="Moestl D."/>
            <person name="Hilbert H."/>
            <person name="Borzym K."/>
            <person name="Langer I."/>
            <person name="Beck A."/>
            <person name="Lehrach H."/>
            <person name="Reinhardt R."/>
            <person name="Pohl T.M."/>
            <person name="Eger P."/>
            <person name="Zimmermann W."/>
            <person name="Wedler H."/>
            <person name="Wambutt R."/>
            <person name="Purnelle B."/>
            <person name="Goffeau A."/>
            <person name="Cadieu E."/>
            <person name="Dreano S."/>
            <person name="Gloux S."/>
            <person name="Lelaure V."/>
            <person name="Mottier S."/>
            <person name="Galibert F."/>
            <person name="Aves S.J."/>
            <person name="Xiang Z."/>
            <person name="Hunt C."/>
            <person name="Moore K."/>
            <person name="Hurst S.M."/>
            <person name="Lucas M."/>
            <person name="Rochet M."/>
            <person name="Gaillardin C."/>
            <person name="Tallada V.A."/>
            <person name="Garzon A."/>
            <person name="Thode G."/>
            <person name="Daga R.R."/>
            <person name="Cruzado L."/>
            <person name="Jimenez J."/>
            <person name="Sanchez M."/>
            <person name="del Rey F."/>
            <person name="Benito J."/>
            <person name="Dominguez A."/>
            <person name="Revuelta J.L."/>
            <person name="Moreno S."/>
            <person name="Armstrong J."/>
            <person name="Forsburg S.L."/>
            <person name="Cerutti L."/>
            <person name="Lowe T."/>
            <person name="McCombie W.R."/>
            <person name="Paulsen I."/>
            <person name="Potashkin J."/>
            <person name="Shpakovski G.V."/>
            <person name="Ussery D."/>
            <person name="Barrell B.G."/>
            <person name="Nurse P."/>
        </authorList>
    </citation>
    <scope>NUCLEOTIDE SEQUENCE [LARGE SCALE GENOMIC DNA]</scope>
    <source>
        <strain>972 / ATCC 24843</strain>
    </source>
</reference>
<reference key="2">
    <citation type="journal article" date="2006" name="Nat. Biotechnol.">
        <title>ORFeome cloning and global analysis of protein localization in the fission yeast Schizosaccharomyces pombe.</title>
        <authorList>
            <person name="Matsuyama A."/>
            <person name="Arai R."/>
            <person name="Yashiroda Y."/>
            <person name="Shirai A."/>
            <person name="Kamata A."/>
            <person name="Sekido S."/>
            <person name="Kobayashi Y."/>
            <person name="Hashimoto A."/>
            <person name="Hamamoto M."/>
            <person name="Hiraoka Y."/>
            <person name="Horinouchi S."/>
            <person name="Yoshida M."/>
        </authorList>
    </citation>
    <scope>SUBCELLULAR LOCATION [LARGE SCALE ANALYSIS]</scope>
</reference>
<proteinExistence type="inferred from homology"/>
<keyword id="KW-0963">Cytoplasm</keyword>
<keyword id="KW-0271">Exosome</keyword>
<keyword id="KW-0539">Nucleus</keyword>
<keyword id="KW-1185">Reference proteome</keyword>
<keyword id="KW-0694">RNA-binding</keyword>
<keyword id="KW-0698">rRNA processing</keyword>